<sequence length="468" mass="51207">MKPVMALVGRANVGKSTLFNRLTRSRDALVADFAGLTRDRHYGNGKQGRHEYIVIDTGGFEPDVASGIYREMARQTQQAIAEADVVVFVVDVRAGVTAQDHDIAHYLRRAGKPCVLAANKAEGMQQDQGGKWAEFYELGLGTVHPVSAAHGQGIRSLVEMALEPLSPPDDGADAAARDLPDADGVDGVDGVDGADGRIIRLAVAGRPNVGKSTLINTWLGEERLVAFDTPGTTRDAITVPFERNGQRFELVDTAGLRRKGKVFAAVEKFSVVKTLQAIESAHVVLLLLDASQGVTEQDAHIAGYILESGRAVVLAVNKWDATDDYQRQLLERSIETRLAFLKFASLHRISAKKRQGLGPLWTAIVQAHKAATCKMSTPVLTRLLLEAVQFQSPQRQGLFRPKMRYAHQGGMNPPVIVIHGNGLEHVTDTYKRFLEGRFRKEFDLVGTPLRIELKTSHNPYVDEGRGGR</sequence>
<evidence type="ECO:0000255" key="1">
    <source>
        <dbReference type="HAMAP-Rule" id="MF_00195"/>
    </source>
</evidence>
<accession>A1WE12</accession>
<keyword id="KW-0342">GTP-binding</keyword>
<keyword id="KW-0547">Nucleotide-binding</keyword>
<keyword id="KW-1185">Reference proteome</keyword>
<keyword id="KW-0677">Repeat</keyword>
<keyword id="KW-0690">Ribosome biogenesis</keyword>
<name>DER_VEREI</name>
<dbReference type="EMBL" id="CP000542">
    <property type="protein sequence ID" value="ABM55869.1"/>
    <property type="molecule type" value="Genomic_DNA"/>
</dbReference>
<dbReference type="RefSeq" id="WP_011807888.1">
    <property type="nucleotide sequence ID" value="NC_008786.1"/>
</dbReference>
<dbReference type="SMR" id="A1WE12"/>
<dbReference type="STRING" id="391735.Veis_0076"/>
<dbReference type="GeneID" id="76458835"/>
<dbReference type="KEGG" id="vei:Veis_0076"/>
<dbReference type="eggNOG" id="COG1160">
    <property type="taxonomic scope" value="Bacteria"/>
</dbReference>
<dbReference type="HOGENOM" id="CLU_016077_5_0_4"/>
<dbReference type="OrthoDB" id="9805918at2"/>
<dbReference type="Proteomes" id="UP000000374">
    <property type="component" value="Chromosome"/>
</dbReference>
<dbReference type="GO" id="GO:0005525">
    <property type="term" value="F:GTP binding"/>
    <property type="evidence" value="ECO:0007669"/>
    <property type="project" value="UniProtKB-UniRule"/>
</dbReference>
<dbReference type="GO" id="GO:0043022">
    <property type="term" value="F:ribosome binding"/>
    <property type="evidence" value="ECO:0007669"/>
    <property type="project" value="TreeGrafter"/>
</dbReference>
<dbReference type="GO" id="GO:0042254">
    <property type="term" value="P:ribosome biogenesis"/>
    <property type="evidence" value="ECO:0007669"/>
    <property type="project" value="UniProtKB-KW"/>
</dbReference>
<dbReference type="CDD" id="cd01894">
    <property type="entry name" value="EngA1"/>
    <property type="match status" value="1"/>
</dbReference>
<dbReference type="CDD" id="cd01895">
    <property type="entry name" value="EngA2"/>
    <property type="match status" value="1"/>
</dbReference>
<dbReference type="FunFam" id="3.40.50.300:FF:000040">
    <property type="entry name" value="GTPase Der"/>
    <property type="match status" value="1"/>
</dbReference>
<dbReference type="FunFam" id="3.40.50.300:FF:000057">
    <property type="entry name" value="GTPase Der"/>
    <property type="match status" value="1"/>
</dbReference>
<dbReference type="Gene3D" id="3.30.300.20">
    <property type="match status" value="1"/>
</dbReference>
<dbReference type="Gene3D" id="3.40.50.300">
    <property type="entry name" value="P-loop containing nucleotide triphosphate hydrolases"/>
    <property type="match status" value="2"/>
</dbReference>
<dbReference type="HAMAP" id="MF_00195">
    <property type="entry name" value="GTPase_Der"/>
    <property type="match status" value="1"/>
</dbReference>
<dbReference type="InterPro" id="IPR031166">
    <property type="entry name" value="G_ENGA"/>
</dbReference>
<dbReference type="InterPro" id="IPR006073">
    <property type="entry name" value="GTP-bd"/>
</dbReference>
<dbReference type="InterPro" id="IPR016484">
    <property type="entry name" value="GTPase_Der"/>
</dbReference>
<dbReference type="InterPro" id="IPR032859">
    <property type="entry name" value="KH_dom-like"/>
</dbReference>
<dbReference type="InterPro" id="IPR015946">
    <property type="entry name" value="KH_dom-like_a/b"/>
</dbReference>
<dbReference type="InterPro" id="IPR027417">
    <property type="entry name" value="P-loop_NTPase"/>
</dbReference>
<dbReference type="InterPro" id="IPR005225">
    <property type="entry name" value="Small_GTP-bd"/>
</dbReference>
<dbReference type="NCBIfam" id="TIGR03594">
    <property type="entry name" value="GTPase_EngA"/>
    <property type="match status" value="1"/>
</dbReference>
<dbReference type="NCBIfam" id="TIGR00231">
    <property type="entry name" value="small_GTP"/>
    <property type="match status" value="2"/>
</dbReference>
<dbReference type="PANTHER" id="PTHR43834">
    <property type="entry name" value="GTPASE DER"/>
    <property type="match status" value="1"/>
</dbReference>
<dbReference type="PANTHER" id="PTHR43834:SF6">
    <property type="entry name" value="GTPASE DER"/>
    <property type="match status" value="1"/>
</dbReference>
<dbReference type="Pfam" id="PF14714">
    <property type="entry name" value="KH_dom-like"/>
    <property type="match status" value="1"/>
</dbReference>
<dbReference type="Pfam" id="PF01926">
    <property type="entry name" value="MMR_HSR1"/>
    <property type="match status" value="2"/>
</dbReference>
<dbReference type="PIRSF" id="PIRSF006485">
    <property type="entry name" value="GTP-binding_EngA"/>
    <property type="match status" value="1"/>
</dbReference>
<dbReference type="PRINTS" id="PR00326">
    <property type="entry name" value="GTP1OBG"/>
</dbReference>
<dbReference type="SUPFAM" id="SSF52540">
    <property type="entry name" value="P-loop containing nucleoside triphosphate hydrolases"/>
    <property type="match status" value="2"/>
</dbReference>
<dbReference type="PROSITE" id="PS51712">
    <property type="entry name" value="G_ENGA"/>
    <property type="match status" value="2"/>
</dbReference>
<organism>
    <name type="scientific">Verminephrobacter eiseniae (strain EF01-2)</name>
    <dbReference type="NCBI Taxonomy" id="391735"/>
    <lineage>
        <taxon>Bacteria</taxon>
        <taxon>Pseudomonadati</taxon>
        <taxon>Pseudomonadota</taxon>
        <taxon>Betaproteobacteria</taxon>
        <taxon>Burkholderiales</taxon>
        <taxon>Comamonadaceae</taxon>
        <taxon>Verminephrobacter</taxon>
    </lineage>
</organism>
<gene>
    <name evidence="1" type="primary">der</name>
    <name type="synonym">engA</name>
    <name type="ordered locus">Veis_0076</name>
</gene>
<protein>
    <recommendedName>
        <fullName evidence="1">GTPase Der</fullName>
    </recommendedName>
    <alternativeName>
        <fullName evidence="1">GTP-binding protein EngA</fullName>
    </alternativeName>
</protein>
<comment type="function">
    <text evidence="1">GTPase that plays an essential role in the late steps of ribosome biogenesis.</text>
</comment>
<comment type="subunit">
    <text evidence="1">Associates with the 50S ribosomal subunit.</text>
</comment>
<comment type="similarity">
    <text evidence="1">Belongs to the TRAFAC class TrmE-Era-EngA-EngB-Septin-like GTPase superfamily. EngA (Der) GTPase family.</text>
</comment>
<feature type="chain" id="PRO_1000011779" description="GTPase Der">
    <location>
        <begin position="1"/>
        <end position="468"/>
    </location>
</feature>
<feature type="domain" description="EngA-type G 1">
    <location>
        <begin position="3"/>
        <end position="169"/>
    </location>
</feature>
<feature type="domain" description="EngA-type G 2">
    <location>
        <begin position="199"/>
        <end position="372"/>
    </location>
</feature>
<feature type="domain" description="KH-like" evidence="1">
    <location>
        <begin position="373"/>
        <end position="457"/>
    </location>
</feature>
<feature type="binding site" evidence="1">
    <location>
        <begin position="9"/>
        <end position="16"/>
    </location>
    <ligand>
        <name>GTP</name>
        <dbReference type="ChEBI" id="CHEBI:37565"/>
        <label>1</label>
    </ligand>
</feature>
<feature type="binding site" evidence="1">
    <location>
        <begin position="56"/>
        <end position="60"/>
    </location>
    <ligand>
        <name>GTP</name>
        <dbReference type="ChEBI" id="CHEBI:37565"/>
        <label>1</label>
    </ligand>
</feature>
<feature type="binding site" evidence="1">
    <location>
        <begin position="119"/>
        <end position="122"/>
    </location>
    <ligand>
        <name>GTP</name>
        <dbReference type="ChEBI" id="CHEBI:37565"/>
        <label>1</label>
    </ligand>
</feature>
<feature type="binding site" evidence="1">
    <location>
        <begin position="205"/>
        <end position="212"/>
    </location>
    <ligand>
        <name>GTP</name>
        <dbReference type="ChEBI" id="CHEBI:37565"/>
        <label>2</label>
    </ligand>
</feature>
<feature type="binding site" evidence="1">
    <location>
        <begin position="252"/>
        <end position="256"/>
    </location>
    <ligand>
        <name>GTP</name>
        <dbReference type="ChEBI" id="CHEBI:37565"/>
        <label>2</label>
    </ligand>
</feature>
<feature type="binding site" evidence="1">
    <location>
        <begin position="317"/>
        <end position="320"/>
    </location>
    <ligand>
        <name>GTP</name>
        <dbReference type="ChEBI" id="CHEBI:37565"/>
        <label>2</label>
    </ligand>
</feature>
<reference key="1">
    <citation type="submission" date="2006-12" db="EMBL/GenBank/DDBJ databases">
        <title>Complete sequence of chromosome 1 of Verminephrobacter eiseniae EF01-2.</title>
        <authorList>
            <person name="Copeland A."/>
            <person name="Lucas S."/>
            <person name="Lapidus A."/>
            <person name="Barry K."/>
            <person name="Detter J.C."/>
            <person name="Glavina del Rio T."/>
            <person name="Dalin E."/>
            <person name="Tice H."/>
            <person name="Pitluck S."/>
            <person name="Chertkov O."/>
            <person name="Brettin T."/>
            <person name="Bruce D."/>
            <person name="Han C."/>
            <person name="Tapia R."/>
            <person name="Gilna P."/>
            <person name="Schmutz J."/>
            <person name="Larimer F."/>
            <person name="Land M."/>
            <person name="Hauser L."/>
            <person name="Kyrpides N."/>
            <person name="Kim E."/>
            <person name="Stahl D."/>
            <person name="Richardson P."/>
        </authorList>
    </citation>
    <scope>NUCLEOTIDE SEQUENCE [LARGE SCALE GENOMIC DNA]</scope>
    <source>
        <strain>EF01-2</strain>
    </source>
</reference>
<proteinExistence type="inferred from homology"/>